<accession>Q8WU90</accession>
<accession>B4DMW2</accession>
<accession>D3DPG7</accession>
<accession>Q5QTQ4</accession>
<accession>Q8WZ06</accession>
<accession>Q9NUZ3</accession>
<accession>Q9NZ37</accession>
<accession>Q9P079</accession>
<sequence length="426" mass="48602">MPPKKQAQAGGSKKAEQKKKEKIIEDKTFGLKNKKGAKQQKFIKAVTHQVKFGQQNPRQVAQSEAEKKLKKDDKKKELQELNELFKPVVAAQKISKGADPKSVVCAFFKQGQCTKGDKCKFSHDLTLERKCEKRSVYIDARDEELEKDTMDNWDEKKLEEVVNKKHGEAEKKKPKTQIVCKHFLEAIENNKYGWFWVCPGGGDICMYRHALPPGFVLKKDKKKEEKEDEISLEDLIERERSALGPNVTKITLESFLAWKKRKRQEKIDKLEQDMERRKADFKAGKALVISGREVFEFRPELVNDDDEEADDTRYTQGTGGDEVDDSVSVNDIDLSLYIPRDVDETGITVASLERFSTYTSDKDENKLSEASGGRAENGERSDLEEDNEREGTENGAIDAVPVDENLFTGEDLDELEEELNTLDLEE</sequence>
<proteinExistence type="evidence at protein level"/>
<protein>
    <recommendedName>
        <fullName>Zinc finger CCCH domain-containing protein 15</fullName>
    </recommendedName>
    <alternativeName>
        <fullName>DRG family-regulatory protein 1</fullName>
    </alternativeName>
    <alternativeName>
        <fullName>Likely ortholog of mouse immediate early response erythropoietin 4</fullName>
    </alternativeName>
</protein>
<dbReference type="EMBL" id="AF109366">
    <property type="protein sequence ID" value="AAQ13514.1"/>
    <property type="status" value="ALT_FRAME"/>
    <property type="molecule type" value="mRNA"/>
</dbReference>
<dbReference type="EMBL" id="AF161421">
    <property type="protein sequence ID" value="AAF28981.1"/>
    <property type="status" value="ALT_FRAME"/>
    <property type="molecule type" value="mRNA"/>
</dbReference>
<dbReference type="EMBL" id="AF220184">
    <property type="protein sequence ID" value="AAF67649.1"/>
    <property type="status" value="ALT_FRAME"/>
    <property type="molecule type" value="mRNA"/>
</dbReference>
<dbReference type="EMBL" id="AK001901">
    <property type="protein sequence ID" value="BAA91968.1"/>
    <property type="molecule type" value="mRNA"/>
</dbReference>
<dbReference type="EMBL" id="AK297658">
    <property type="protein sequence ID" value="BAG60024.1"/>
    <property type="molecule type" value="mRNA"/>
</dbReference>
<dbReference type="EMBL" id="AF289586">
    <property type="protein sequence ID" value="AAL55770.1"/>
    <property type="status" value="ALT_FRAME"/>
    <property type="molecule type" value="mRNA"/>
</dbReference>
<dbReference type="EMBL" id="AC018867">
    <property type="protein sequence ID" value="AAX88885.1"/>
    <property type="molecule type" value="Genomic_DNA"/>
</dbReference>
<dbReference type="EMBL" id="CH471058">
    <property type="protein sequence ID" value="EAX10935.1"/>
    <property type="molecule type" value="Genomic_DNA"/>
</dbReference>
<dbReference type="EMBL" id="CH471058">
    <property type="protein sequence ID" value="EAX10936.1"/>
    <property type="molecule type" value="Genomic_DNA"/>
</dbReference>
<dbReference type="EMBL" id="BC021102">
    <property type="protein sequence ID" value="AAH21102.1"/>
    <property type="molecule type" value="mRNA"/>
</dbReference>
<dbReference type="CCDS" id="CCDS42791.1">
    <molecule id="Q8WU90-1"/>
</dbReference>
<dbReference type="RefSeq" id="NP_060941.2">
    <molecule id="Q8WU90-1"/>
    <property type="nucleotide sequence ID" value="NM_018471.3"/>
</dbReference>
<dbReference type="SMR" id="Q8WU90"/>
<dbReference type="BioGRID" id="120956">
    <property type="interactions" value="127"/>
</dbReference>
<dbReference type="CORUM" id="Q8WU90"/>
<dbReference type="FunCoup" id="Q8WU90">
    <property type="interactions" value="3015"/>
</dbReference>
<dbReference type="IntAct" id="Q8WU90">
    <property type="interactions" value="48"/>
</dbReference>
<dbReference type="MINT" id="Q8WU90"/>
<dbReference type="STRING" id="9606.ENSP00000338788"/>
<dbReference type="GlyGen" id="Q8WU90">
    <property type="glycosylation" value="1 site, 1 O-linked glycan (1 site)"/>
</dbReference>
<dbReference type="iPTMnet" id="Q8WU90"/>
<dbReference type="MetOSite" id="Q8WU90"/>
<dbReference type="PhosphoSitePlus" id="Q8WU90"/>
<dbReference type="SwissPalm" id="Q8WU90"/>
<dbReference type="BioMuta" id="ZC3H15"/>
<dbReference type="DMDM" id="74730681"/>
<dbReference type="jPOST" id="Q8WU90"/>
<dbReference type="MassIVE" id="Q8WU90"/>
<dbReference type="PaxDb" id="9606-ENSP00000338788"/>
<dbReference type="PeptideAtlas" id="Q8WU90"/>
<dbReference type="ProteomicsDB" id="4648"/>
<dbReference type="ProteomicsDB" id="74645">
    <molecule id="Q8WU90-1"/>
</dbReference>
<dbReference type="Pumba" id="Q8WU90"/>
<dbReference type="Antibodypedia" id="34002">
    <property type="antibodies" value="123 antibodies from 23 providers"/>
</dbReference>
<dbReference type="DNASU" id="55854"/>
<dbReference type="Ensembl" id="ENST00000337859.11">
    <molecule id="Q8WU90-1"/>
    <property type="protein sequence ID" value="ENSP00000338788.6"/>
    <property type="gene ID" value="ENSG00000065548.19"/>
</dbReference>
<dbReference type="Ensembl" id="ENST00000718440.1">
    <molecule id="Q8WU90-1"/>
    <property type="protein sequence ID" value="ENSP00000520825.1"/>
    <property type="gene ID" value="ENSG00000065548.19"/>
</dbReference>
<dbReference type="GeneID" id="55854"/>
<dbReference type="KEGG" id="hsa:55854"/>
<dbReference type="MANE-Select" id="ENST00000337859.11">
    <property type="protein sequence ID" value="ENSP00000338788.6"/>
    <property type="RefSeq nucleotide sequence ID" value="NM_018471.3"/>
    <property type="RefSeq protein sequence ID" value="NP_060941.2"/>
</dbReference>
<dbReference type="UCSC" id="uc002upo.4">
    <molecule id="Q8WU90-1"/>
    <property type="organism name" value="human"/>
</dbReference>
<dbReference type="AGR" id="HGNC:29528"/>
<dbReference type="CTD" id="55854"/>
<dbReference type="DisGeNET" id="55854"/>
<dbReference type="GeneCards" id="ZC3H15"/>
<dbReference type="HGNC" id="HGNC:29528">
    <property type="gene designation" value="ZC3H15"/>
</dbReference>
<dbReference type="HPA" id="ENSG00000065548">
    <property type="expression patterns" value="Low tissue specificity"/>
</dbReference>
<dbReference type="MIM" id="619704">
    <property type="type" value="gene"/>
</dbReference>
<dbReference type="neXtProt" id="NX_Q8WU90"/>
<dbReference type="OpenTargets" id="ENSG00000065548"/>
<dbReference type="PharmGKB" id="PA162409508"/>
<dbReference type="VEuPathDB" id="HostDB:ENSG00000065548"/>
<dbReference type="eggNOG" id="KOG1763">
    <property type="taxonomic scope" value="Eukaryota"/>
</dbReference>
<dbReference type="GeneTree" id="ENSGT00390000015818"/>
<dbReference type="HOGENOM" id="CLU_042870_3_0_1"/>
<dbReference type="InParanoid" id="Q8WU90"/>
<dbReference type="OMA" id="GREMFYF"/>
<dbReference type="OrthoDB" id="278280at2759"/>
<dbReference type="PAN-GO" id="Q8WU90">
    <property type="GO annotations" value="2 GO annotations based on evolutionary models"/>
</dbReference>
<dbReference type="PhylomeDB" id="Q8WU90"/>
<dbReference type="TreeFam" id="TF300892"/>
<dbReference type="PathwayCommons" id="Q8WU90"/>
<dbReference type="Reactome" id="R-HSA-9629569">
    <property type="pathway name" value="Protein hydroxylation"/>
</dbReference>
<dbReference type="SignaLink" id="Q8WU90"/>
<dbReference type="BioGRID-ORCS" id="55854">
    <property type="hits" value="24 hits in 1183 CRISPR screens"/>
</dbReference>
<dbReference type="ChiTaRS" id="ZC3H15">
    <property type="organism name" value="human"/>
</dbReference>
<dbReference type="GenomeRNAi" id="55854"/>
<dbReference type="Pharos" id="Q8WU90">
    <property type="development level" value="Tbio"/>
</dbReference>
<dbReference type="PRO" id="PR:Q8WU90"/>
<dbReference type="Proteomes" id="UP000005640">
    <property type="component" value="Chromosome 2"/>
</dbReference>
<dbReference type="RNAct" id="Q8WU90">
    <property type="molecule type" value="protein"/>
</dbReference>
<dbReference type="Bgee" id="ENSG00000065548">
    <property type="expression patterns" value="Expressed in sperm and 217 other cell types or tissues"/>
</dbReference>
<dbReference type="ExpressionAtlas" id="Q8WU90">
    <property type="expression patterns" value="baseline and differential"/>
</dbReference>
<dbReference type="GO" id="GO:0005829">
    <property type="term" value="C:cytosol"/>
    <property type="evidence" value="ECO:0000314"/>
    <property type="project" value="HPA"/>
</dbReference>
<dbReference type="GO" id="GO:0005634">
    <property type="term" value="C:nucleus"/>
    <property type="evidence" value="ECO:0007669"/>
    <property type="project" value="UniProtKB-SubCell"/>
</dbReference>
<dbReference type="GO" id="GO:0045296">
    <property type="term" value="F:cadherin binding"/>
    <property type="evidence" value="ECO:0007005"/>
    <property type="project" value="BHF-UCL"/>
</dbReference>
<dbReference type="GO" id="GO:0003723">
    <property type="term" value="F:RNA binding"/>
    <property type="evidence" value="ECO:0007005"/>
    <property type="project" value="UniProtKB"/>
</dbReference>
<dbReference type="GO" id="GO:0008270">
    <property type="term" value="F:zinc ion binding"/>
    <property type="evidence" value="ECO:0007669"/>
    <property type="project" value="UniProtKB-KW"/>
</dbReference>
<dbReference type="GO" id="GO:0019221">
    <property type="term" value="P:cytokine-mediated signaling pathway"/>
    <property type="evidence" value="ECO:0007669"/>
    <property type="project" value="Ensembl"/>
</dbReference>
<dbReference type="GO" id="GO:0002181">
    <property type="term" value="P:cytoplasmic translation"/>
    <property type="evidence" value="ECO:0000318"/>
    <property type="project" value="GO_Central"/>
</dbReference>
<dbReference type="GO" id="GO:0043547">
    <property type="term" value="P:positive regulation of GTPase activity"/>
    <property type="evidence" value="ECO:0000314"/>
    <property type="project" value="UniProtKB"/>
</dbReference>
<dbReference type="FunFam" id="4.10.1000.10:FF:000050">
    <property type="entry name" value="AGAP008634-PA"/>
    <property type="match status" value="1"/>
</dbReference>
<dbReference type="Gene3D" id="6.20.400.10">
    <property type="match status" value="1"/>
</dbReference>
<dbReference type="Gene3D" id="4.10.1000.10">
    <property type="entry name" value="Zinc finger, CCCH-type"/>
    <property type="match status" value="1"/>
</dbReference>
<dbReference type="InterPro" id="IPR032378">
    <property type="entry name" value="ZC3H15/TMA46_C"/>
</dbReference>
<dbReference type="InterPro" id="IPR000571">
    <property type="entry name" value="Znf_CCCH"/>
</dbReference>
<dbReference type="InterPro" id="IPR036855">
    <property type="entry name" value="Znf_CCCH_sf"/>
</dbReference>
<dbReference type="PANTHER" id="PTHR12681:SF0">
    <property type="entry name" value="ZINC FINGER CCCH DOMAIN-CONTAINING PROTEIN 15"/>
    <property type="match status" value="1"/>
</dbReference>
<dbReference type="PANTHER" id="PTHR12681">
    <property type="entry name" value="ZINC FINGER-CONTAINING PROTEIN P48ZNF"/>
    <property type="match status" value="1"/>
</dbReference>
<dbReference type="Pfam" id="PF16543">
    <property type="entry name" value="DFRP_C"/>
    <property type="match status" value="1"/>
</dbReference>
<dbReference type="Pfam" id="PF00642">
    <property type="entry name" value="zf-CCCH"/>
    <property type="match status" value="1"/>
</dbReference>
<dbReference type="SMART" id="SM00356">
    <property type="entry name" value="ZnF_C3H1"/>
    <property type="match status" value="2"/>
</dbReference>
<dbReference type="SUPFAM" id="SSF90229">
    <property type="entry name" value="CCCH zinc finger"/>
    <property type="match status" value="1"/>
</dbReference>
<dbReference type="PROSITE" id="PS50103">
    <property type="entry name" value="ZF_C3H1"/>
    <property type="match status" value="2"/>
</dbReference>
<reference key="1">
    <citation type="submission" date="1998-11" db="EMBL/GenBank/DDBJ databases">
        <authorList>
            <person name="Hui R.T."/>
            <person name="Liu Y.Q."/>
            <person name="Liu B."/>
            <person name="Zhao B."/>
            <person name="Meng X.M."/>
            <person name="Sheng H."/>
            <person name="Xu Y.Y."/>
            <person name="Wang X.Y."/>
            <person name="Ye J."/>
            <person name="Song L."/>
            <person name="Gao Y."/>
            <person name="Wei Y.J."/>
            <person name="Zhang C.L."/>
            <person name="Zhang J."/>
            <person name="Chai M.Q."/>
            <person name="Chen J.Z."/>
            <person name="Sun Y.H."/>
            <person name="Zhou X.L."/>
            <person name="Jiang Y.X."/>
            <person name="Zhao X.W."/>
            <person name="Liu S."/>
            <person name="Cao H.Q."/>
            <person name="Zhao Y."/>
            <person name="Liu D.Q."/>
            <person name="Ding J.F."/>
            <person name="Liu L.S."/>
            <person name="Gao R.L."/>
            <person name="Wu Q.Y."/>
            <person name="Qiang B.Q."/>
            <person name="Yuan J.G."/>
            <person name="Liew C.C."/>
            <person name="Zhao M.S."/>
        </authorList>
    </citation>
    <scope>NUCLEOTIDE SEQUENCE [LARGE SCALE MRNA] (ISOFORM 1)</scope>
    <source>
        <tissue>Aorta</tissue>
    </source>
</reference>
<reference key="2">
    <citation type="submission" date="1999-05" db="EMBL/GenBank/DDBJ databases">
        <title>Human partial CDS from CD34+ stem cells.</title>
        <authorList>
            <person name="Ye M."/>
            <person name="Zhang Q.-H."/>
            <person name="Zhou J."/>
            <person name="Shen Y."/>
            <person name="Wu X.-Y."/>
            <person name="Guan Z.Q."/>
            <person name="Wang L."/>
            <person name="Fan H.-Y."/>
            <person name="Mao Y.-F."/>
            <person name="Dai M."/>
            <person name="Huang Q.-H."/>
            <person name="Chen S.-J."/>
            <person name="Chen Z."/>
        </authorList>
    </citation>
    <scope>NUCLEOTIDE SEQUENCE [LARGE SCALE MRNA] (ISOFORM 1)</scope>
    <source>
        <tissue>Umbilical cord blood</tissue>
    </source>
</reference>
<reference key="3">
    <citation type="journal article" date="2000" name="Proc. Natl. Acad. Sci. U.S.A.">
        <title>Gene expression profiling in the human hypothalamus-pituitary-adrenal axis and full-length cDNA cloning.</title>
        <authorList>
            <person name="Hu R.-M."/>
            <person name="Han Z.-G."/>
            <person name="Song H.-D."/>
            <person name="Peng Y.-D."/>
            <person name="Huang Q.-H."/>
            <person name="Ren S.-X."/>
            <person name="Gu Y.-J."/>
            <person name="Huang C.-H."/>
            <person name="Li Y.-B."/>
            <person name="Jiang C.-L."/>
            <person name="Fu G."/>
            <person name="Zhang Q.-H."/>
            <person name="Gu B.-W."/>
            <person name="Dai M."/>
            <person name="Mao Y.-F."/>
            <person name="Gao G.-F."/>
            <person name="Rong R."/>
            <person name="Ye M."/>
            <person name="Zhou J."/>
            <person name="Xu S.-H."/>
            <person name="Gu J."/>
            <person name="Shi J.-X."/>
            <person name="Jin W.-R."/>
            <person name="Zhang C.-K."/>
            <person name="Wu T.-M."/>
            <person name="Huang G.-Y."/>
            <person name="Chen Z."/>
            <person name="Chen M.-D."/>
            <person name="Chen J.-L."/>
        </authorList>
    </citation>
    <scope>NUCLEOTIDE SEQUENCE [LARGE SCALE MRNA] (ISOFORM 1)</scope>
    <source>
        <tissue>Hypothalamus</tissue>
    </source>
</reference>
<reference key="4">
    <citation type="journal article" date="2004" name="Nat. Genet.">
        <title>Complete sequencing and characterization of 21,243 full-length human cDNAs.</title>
        <authorList>
            <person name="Ota T."/>
            <person name="Suzuki Y."/>
            <person name="Nishikawa T."/>
            <person name="Otsuki T."/>
            <person name="Sugiyama T."/>
            <person name="Irie R."/>
            <person name="Wakamatsu A."/>
            <person name="Hayashi K."/>
            <person name="Sato H."/>
            <person name="Nagai K."/>
            <person name="Kimura K."/>
            <person name="Makita H."/>
            <person name="Sekine M."/>
            <person name="Obayashi M."/>
            <person name="Nishi T."/>
            <person name="Shibahara T."/>
            <person name="Tanaka T."/>
            <person name="Ishii S."/>
            <person name="Yamamoto J."/>
            <person name="Saito K."/>
            <person name="Kawai Y."/>
            <person name="Isono Y."/>
            <person name="Nakamura Y."/>
            <person name="Nagahari K."/>
            <person name="Murakami K."/>
            <person name="Yasuda T."/>
            <person name="Iwayanagi T."/>
            <person name="Wagatsuma M."/>
            <person name="Shiratori A."/>
            <person name="Sudo H."/>
            <person name="Hosoiri T."/>
            <person name="Kaku Y."/>
            <person name="Kodaira H."/>
            <person name="Kondo H."/>
            <person name="Sugawara M."/>
            <person name="Takahashi M."/>
            <person name="Kanda K."/>
            <person name="Yokoi T."/>
            <person name="Furuya T."/>
            <person name="Kikkawa E."/>
            <person name="Omura Y."/>
            <person name="Abe K."/>
            <person name="Kamihara K."/>
            <person name="Katsuta N."/>
            <person name="Sato K."/>
            <person name="Tanikawa M."/>
            <person name="Yamazaki M."/>
            <person name="Ninomiya K."/>
            <person name="Ishibashi T."/>
            <person name="Yamashita H."/>
            <person name="Murakawa K."/>
            <person name="Fujimori K."/>
            <person name="Tanai H."/>
            <person name="Kimata M."/>
            <person name="Watanabe M."/>
            <person name="Hiraoka S."/>
            <person name="Chiba Y."/>
            <person name="Ishida S."/>
            <person name="Ono Y."/>
            <person name="Takiguchi S."/>
            <person name="Watanabe S."/>
            <person name="Yosida M."/>
            <person name="Hotuta T."/>
            <person name="Kusano J."/>
            <person name="Kanehori K."/>
            <person name="Takahashi-Fujii A."/>
            <person name="Hara H."/>
            <person name="Tanase T.-O."/>
            <person name="Nomura Y."/>
            <person name="Togiya S."/>
            <person name="Komai F."/>
            <person name="Hara R."/>
            <person name="Takeuchi K."/>
            <person name="Arita M."/>
            <person name="Imose N."/>
            <person name="Musashino K."/>
            <person name="Yuuki H."/>
            <person name="Oshima A."/>
            <person name="Sasaki N."/>
            <person name="Aotsuka S."/>
            <person name="Yoshikawa Y."/>
            <person name="Matsunawa H."/>
            <person name="Ichihara T."/>
            <person name="Shiohata N."/>
            <person name="Sano S."/>
            <person name="Moriya S."/>
            <person name="Momiyama H."/>
            <person name="Satoh N."/>
            <person name="Takami S."/>
            <person name="Terashima Y."/>
            <person name="Suzuki O."/>
            <person name="Nakagawa S."/>
            <person name="Senoh A."/>
            <person name="Mizoguchi H."/>
            <person name="Goto Y."/>
            <person name="Shimizu F."/>
            <person name="Wakebe H."/>
            <person name="Hishigaki H."/>
            <person name="Watanabe T."/>
            <person name="Sugiyama A."/>
            <person name="Takemoto M."/>
            <person name="Kawakami B."/>
            <person name="Yamazaki M."/>
            <person name="Watanabe K."/>
            <person name="Kumagai A."/>
            <person name="Itakura S."/>
            <person name="Fukuzumi Y."/>
            <person name="Fujimori Y."/>
            <person name="Komiyama M."/>
            <person name="Tashiro H."/>
            <person name="Tanigami A."/>
            <person name="Fujiwara T."/>
            <person name="Ono T."/>
            <person name="Yamada K."/>
            <person name="Fujii Y."/>
            <person name="Ozaki K."/>
            <person name="Hirao M."/>
            <person name="Ohmori Y."/>
            <person name="Kawabata A."/>
            <person name="Hikiji T."/>
            <person name="Kobatake N."/>
            <person name="Inagaki H."/>
            <person name="Ikema Y."/>
            <person name="Okamoto S."/>
            <person name="Okitani R."/>
            <person name="Kawakami T."/>
            <person name="Noguchi S."/>
            <person name="Itoh T."/>
            <person name="Shigeta K."/>
            <person name="Senba T."/>
            <person name="Matsumura K."/>
            <person name="Nakajima Y."/>
            <person name="Mizuno T."/>
            <person name="Morinaga M."/>
            <person name="Sasaki M."/>
            <person name="Togashi T."/>
            <person name="Oyama M."/>
            <person name="Hata H."/>
            <person name="Watanabe M."/>
            <person name="Komatsu T."/>
            <person name="Mizushima-Sugano J."/>
            <person name="Satoh T."/>
            <person name="Shirai Y."/>
            <person name="Takahashi Y."/>
            <person name="Nakagawa K."/>
            <person name="Okumura K."/>
            <person name="Nagase T."/>
            <person name="Nomura N."/>
            <person name="Kikuchi H."/>
            <person name="Masuho Y."/>
            <person name="Yamashita R."/>
            <person name="Nakai K."/>
            <person name="Yada T."/>
            <person name="Nakamura Y."/>
            <person name="Ohara O."/>
            <person name="Isogai T."/>
            <person name="Sugano S."/>
        </authorList>
    </citation>
    <scope>NUCLEOTIDE SEQUENCE [LARGE SCALE MRNA] (ISOFORMS 1 AND 2)</scope>
    <source>
        <tissue>Brain</tissue>
        <tissue>Placenta</tissue>
    </source>
</reference>
<reference key="5">
    <citation type="journal article" date="2004" name="Proc. Natl. Acad. Sci. U.S.A.">
        <title>Large-scale cDNA transfection screening for genes related to cancer development and progression.</title>
        <authorList>
            <person name="Wan D."/>
            <person name="Gong Y."/>
            <person name="Qin W."/>
            <person name="Zhang P."/>
            <person name="Li J."/>
            <person name="Wei L."/>
            <person name="Zhou X."/>
            <person name="Li H."/>
            <person name="Qiu X."/>
            <person name="Zhong F."/>
            <person name="He L."/>
            <person name="Yu J."/>
            <person name="Yao G."/>
            <person name="Jiang H."/>
            <person name="Qian L."/>
            <person name="Yu Y."/>
            <person name="Shu H."/>
            <person name="Chen X."/>
            <person name="Xu H."/>
            <person name="Guo M."/>
            <person name="Pan Z."/>
            <person name="Chen Y."/>
            <person name="Ge C."/>
            <person name="Yang S."/>
            <person name="Gu J."/>
        </authorList>
    </citation>
    <scope>NUCLEOTIDE SEQUENCE [LARGE SCALE MRNA] (ISOFORM 1)</scope>
</reference>
<reference key="6">
    <citation type="journal article" date="2005" name="Nature">
        <title>Generation and annotation of the DNA sequences of human chromosomes 2 and 4.</title>
        <authorList>
            <person name="Hillier L.W."/>
            <person name="Graves T.A."/>
            <person name="Fulton R.S."/>
            <person name="Fulton L.A."/>
            <person name="Pepin K.H."/>
            <person name="Minx P."/>
            <person name="Wagner-McPherson C."/>
            <person name="Layman D."/>
            <person name="Wylie K."/>
            <person name="Sekhon M."/>
            <person name="Becker M.C."/>
            <person name="Fewell G.A."/>
            <person name="Delehaunty K.D."/>
            <person name="Miner T.L."/>
            <person name="Nash W.E."/>
            <person name="Kremitzki C."/>
            <person name="Oddy L."/>
            <person name="Du H."/>
            <person name="Sun H."/>
            <person name="Bradshaw-Cordum H."/>
            <person name="Ali J."/>
            <person name="Carter J."/>
            <person name="Cordes M."/>
            <person name="Harris A."/>
            <person name="Isak A."/>
            <person name="van Brunt A."/>
            <person name="Nguyen C."/>
            <person name="Du F."/>
            <person name="Courtney L."/>
            <person name="Kalicki J."/>
            <person name="Ozersky P."/>
            <person name="Abbott S."/>
            <person name="Armstrong J."/>
            <person name="Belter E.A."/>
            <person name="Caruso L."/>
            <person name="Cedroni M."/>
            <person name="Cotton M."/>
            <person name="Davidson T."/>
            <person name="Desai A."/>
            <person name="Elliott G."/>
            <person name="Erb T."/>
            <person name="Fronick C."/>
            <person name="Gaige T."/>
            <person name="Haakenson W."/>
            <person name="Haglund K."/>
            <person name="Holmes A."/>
            <person name="Harkins R."/>
            <person name="Kim K."/>
            <person name="Kruchowski S.S."/>
            <person name="Strong C.M."/>
            <person name="Grewal N."/>
            <person name="Goyea E."/>
            <person name="Hou S."/>
            <person name="Levy A."/>
            <person name="Martinka S."/>
            <person name="Mead K."/>
            <person name="McLellan M.D."/>
            <person name="Meyer R."/>
            <person name="Randall-Maher J."/>
            <person name="Tomlinson C."/>
            <person name="Dauphin-Kohlberg S."/>
            <person name="Kozlowicz-Reilly A."/>
            <person name="Shah N."/>
            <person name="Swearengen-Shahid S."/>
            <person name="Snider J."/>
            <person name="Strong J.T."/>
            <person name="Thompson J."/>
            <person name="Yoakum M."/>
            <person name="Leonard S."/>
            <person name="Pearman C."/>
            <person name="Trani L."/>
            <person name="Radionenko M."/>
            <person name="Waligorski J.E."/>
            <person name="Wang C."/>
            <person name="Rock S.M."/>
            <person name="Tin-Wollam A.-M."/>
            <person name="Maupin R."/>
            <person name="Latreille P."/>
            <person name="Wendl M.C."/>
            <person name="Yang S.-P."/>
            <person name="Pohl C."/>
            <person name="Wallis J.W."/>
            <person name="Spieth J."/>
            <person name="Bieri T.A."/>
            <person name="Berkowicz N."/>
            <person name="Nelson J.O."/>
            <person name="Osborne J."/>
            <person name="Ding L."/>
            <person name="Meyer R."/>
            <person name="Sabo A."/>
            <person name="Shotland Y."/>
            <person name="Sinha P."/>
            <person name="Wohldmann P.E."/>
            <person name="Cook L.L."/>
            <person name="Hickenbotham M.T."/>
            <person name="Eldred J."/>
            <person name="Williams D."/>
            <person name="Jones T.A."/>
            <person name="She X."/>
            <person name="Ciccarelli F.D."/>
            <person name="Izaurralde E."/>
            <person name="Taylor J."/>
            <person name="Schmutz J."/>
            <person name="Myers R.M."/>
            <person name="Cox D.R."/>
            <person name="Huang X."/>
            <person name="McPherson J.D."/>
            <person name="Mardis E.R."/>
            <person name="Clifton S.W."/>
            <person name="Warren W.C."/>
            <person name="Chinwalla A.T."/>
            <person name="Eddy S.R."/>
            <person name="Marra M.A."/>
            <person name="Ovcharenko I."/>
            <person name="Furey T.S."/>
            <person name="Miller W."/>
            <person name="Eichler E.E."/>
            <person name="Bork P."/>
            <person name="Suyama M."/>
            <person name="Torrents D."/>
            <person name="Waterston R.H."/>
            <person name="Wilson R.K."/>
        </authorList>
    </citation>
    <scope>NUCLEOTIDE SEQUENCE [LARGE SCALE GENOMIC DNA]</scope>
</reference>
<reference key="7">
    <citation type="submission" date="2005-09" db="EMBL/GenBank/DDBJ databases">
        <authorList>
            <person name="Mural R.J."/>
            <person name="Istrail S."/>
            <person name="Sutton G.G."/>
            <person name="Florea L."/>
            <person name="Halpern A.L."/>
            <person name="Mobarry C.M."/>
            <person name="Lippert R."/>
            <person name="Walenz B."/>
            <person name="Shatkay H."/>
            <person name="Dew I."/>
            <person name="Miller J.R."/>
            <person name="Flanigan M.J."/>
            <person name="Edwards N.J."/>
            <person name="Bolanos R."/>
            <person name="Fasulo D."/>
            <person name="Halldorsson B.V."/>
            <person name="Hannenhalli S."/>
            <person name="Turner R."/>
            <person name="Yooseph S."/>
            <person name="Lu F."/>
            <person name="Nusskern D.R."/>
            <person name="Shue B.C."/>
            <person name="Zheng X.H."/>
            <person name="Zhong F."/>
            <person name="Delcher A.L."/>
            <person name="Huson D.H."/>
            <person name="Kravitz S.A."/>
            <person name="Mouchard L."/>
            <person name="Reinert K."/>
            <person name="Remington K.A."/>
            <person name="Clark A.G."/>
            <person name="Waterman M.S."/>
            <person name="Eichler E.E."/>
            <person name="Adams M.D."/>
            <person name="Hunkapiller M.W."/>
            <person name="Myers E.W."/>
            <person name="Venter J.C."/>
        </authorList>
    </citation>
    <scope>NUCLEOTIDE SEQUENCE [LARGE SCALE GENOMIC DNA]</scope>
</reference>
<reference key="8">
    <citation type="journal article" date="2004" name="Genome Res.">
        <title>The status, quality, and expansion of the NIH full-length cDNA project: the Mammalian Gene Collection (MGC).</title>
        <authorList>
            <consortium name="The MGC Project Team"/>
        </authorList>
    </citation>
    <scope>NUCLEOTIDE SEQUENCE [LARGE SCALE MRNA] (ISOFORM 1)</scope>
    <source>
        <tissue>Muscle</tissue>
    </source>
</reference>
<reference key="9">
    <citation type="journal article" date="2005" name="Genes Cells">
        <title>Identification of DRG family regulatory proteins (DFRPs): specific regulation of DRG1 and DRG2.</title>
        <authorList>
            <person name="Ishikawa K."/>
            <person name="Azuma S."/>
            <person name="Ikawa S."/>
            <person name="Semba K."/>
            <person name="Inoue J."/>
        </authorList>
    </citation>
    <scope>INTERACTION WITH DRG1</scope>
    <scope>SUBCELLULAR LOCATION</scope>
</reference>
<reference key="10">
    <citation type="journal article" date="2006" name="Cell">
        <title>Global, in vivo, and site-specific phosphorylation dynamics in signaling networks.</title>
        <authorList>
            <person name="Olsen J.V."/>
            <person name="Blagoev B."/>
            <person name="Gnad F."/>
            <person name="Macek B."/>
            <person name="Kumar C."/>
            <person name="Mortensen P."/>
            <person name="Mann M."/>
        </authorList>
    </citation>
    <scope>PHOSPHORYLATION [LARGE SCALE ANALYSIS] AT SER-381</scope>
    <scope>IDENTIFICATION BY MASS SPECTROMETRY [LARGE SCALE ANALYSIS]</scope>
    <source>
        <tissue>Cervix carcinoma</tissue>
    </source>
</reference>
<reference key="11">
    <citation type="journal article" date="2009" name="Biochem. Biophys. Res. Commun.">
        <title>Independent stabilizations of polysomal Drg1/Dfrp1 complex and non-polysomal Drg2/Dfrp2 complex in mammalian cells.</title>
        <authorList>
            <person name="Ishikawa K."/>
            <person name="Akiyama T."/>
            <person name="Ito K."/>
            <person name="Semba K."/>
            <person name="Inoue J."/>
        </authorList>
    </citation>
    <scope>INTERACTION WITH DRG1 IN THE DRG1-ZC3H15/DFRP1 COMPLEX</scope>
    <scope>SUBCELLULAR LOCATION</scope>
</reference>
<reference key="12">
    <citation type="journal article" date="2009" name="Sci. Signal.">
        <title>Quantitative phosphoproteomic analysis of T cell receptor signaling reveals system-wide modulation of protein-protein interactions.</title>
        <authorList>
            <person name="Mayya V."/>
            <person name="Lundgren D.H."/>
            <person name="Hwang S.-I."/>
            <person name="Rezaul K."/>
            <person name="Wu L."/>
            <person name="Eng J.K."/>
            <person name="Rodionov V."/>
            <person name="Han D.K."/>
        </authorList>
    </citation>
    <scope>PHOSPHORYLATION [LARGE SCALE ANALYSIS] AT SER-351</scope>
    <scope>IDENTIFICATION BY MASS SPECTROMETRY [LARGE SCALE ANALYSIS]</scope>
    <source>
        <tissue>Leukemic T-cell</tissue>
    </source>
</reference>
<reference key="13">
    <citation type="journal article" date="2010" name="Sci. Signal.">
        <title>Quantitative phosphoproteomics reveals widespread full phosphorylation site occupancy during mitosis.</title>
        <authorList>
            <person name="Olsen J.V."/>
            <person name="Vermeulen M."/>
            <person name="Santamaria A."/>
            <person name="Kumar C."/>
            <person name="Miller M.L."/>
            <person name="Jensen L.J."/>
            <person name="Gnad F."/>
            <person name="Cox J."/>
            <person name="Jensen T.S."/>
            <person name="Nigg E.A."/>
            <person name="Brunak S."/>
            <person name="Mann M."/>
        </authorList>
    </citation>
    <scope>PHOSPHORYLATION [LARGE SCALE ANALYSIS] AT SER-351</scope>
    <scope>IDENTIFICATION BY MASS SPECTROMETRY [LARGE SCALE ANALYSIS]</scope>
    <source>
        <tissue>Cervix carcinoma</tissue>
    </source>
</reference>
<reference key="14">
    <citation type="journal article" date="2011" name="BMC Syst. Biol.">
        <title>Initial characterization of the human central proteome.</title>
        <authorList>
            <person name="Burkard T.R."/>
            <person name="Planyavsky M."/>
            <person name="Kaupe I."/>
            <person name="Breitwieser F.P."/>
            <person name="Buerckstuemmer T."/>
            <person name="Bennett K.L."/>
            <person name="Superti-Furga G."/>
            <person name="Colinge J."/>
        </authorList>
    </citation>
    <scope>IDENTIFICATION BY MASS SPECTROMETRY [LARGE SCALE ANALYSIS]</scope>
</reference>
<reference key="15">
    <citation type="journal article" date="2011" name="Sci. Signal.">
        <title>System-wide temporal characterization of the proteome and phosphoproteome of human embryonic stem cell differentiation.</title>
        <authorList>
            <person name="Rigbolt K.T."/>
            <person name="Prokhorova T.A."/>
            <person name="Akimov V."/>
            <person name="Henningsen J."/>
            <person name="Johansen P.T."/>
            <person name="Kratchmarova I."/>
            <person name="Kassem M."/>
            <person name="Mann M."/>
            <person name="Olsen J.V."/>
            <person name="Blagoev B."/>
        </authorList>
    </citation>
    <scope>PHOSPHORYLATION [LARGE SCALE ANALYSIS] AT SER-381</scope>
    <scope>IDENTIFICATION BY MASS SPECTROMETRY [LARGE SCALE ANALYSIS]</scope>
</reference>
<reference key="16">
    <citation type="journal article" date="2013" name="FEBS J.">
        <title>Human Drg1 is a potassium-dependent GTPase enhanced by Lerepo4.</title>
        <authorList>
            <person name="Perez-Arellano I."/>
            <person name="Spinola-Amilibia M."/>
            <person name="Bravo J."/>
        </authorList>
    </citation>
    <scope>FUNCTION</scope>
    <scope>INTERACTION WITH DRG1</scope>
</reference>
<reference key="17">
    <citation type="journal article" date="2013" name="J. Proteome Res.">
        <title>Toward a comprehensive characterization of a human cancer cell phosphoproteome.</title>
        <authorList>
            <person name="Zhou H."/>
            <person name="Di Palma S."/>
            <person name="Preisinger C."/>
            <person name="Peng M."/>
            <person name="Polat A.N."/>
            <person name="Heck A.J."/>
            <person name="Mohammed S."/>
        </authorList>
    </citation>
    <scope>PHOSPHORYLATION [LARGE SCALE ANALYSIS] AT SER-231; SER-351; SER-360 AND SER-381</scope>
    <scope>IDENTIFICATION BY MASS SPECTROMETRY [LARGE SCALE ANALYSIS]</scope>
    <source>
        <tissue>Cervix carcinoma</tissue>
        <tissue>Erythroleukemia</tissue>
    </source>
</reference>
<reference key="18">
    <citation type="journal article" date="2014" name="J. Proteomics">
        <title>An enzyme assisted RP-RPLC approach for in-depth analysis of human liver phosphoproteome.</title>
        <authorList>
            <person name="Bian Y."/>
            <person name="Song C."/>
            <person name="Cheng K."/>
            <person name="Dong M."/>
            <person name="Wang F."/>
            <person name="Huang J."/>
            <person name="Sun D."/>
            <person name="Wang L."/>
            <person name="Ye M."/>
            <person name="Zou H."/>
        </authorList>
    </citation>
    <scope>IDENTIFICATION BY MASS SPECTROMETRY [LARGE SCALE ANALYSIS]</scope>
    <source>
        <tissue>Liver</tissue>
    </source>
</reference>
<reference key="19">
    <citation type="journal article" date="2015" name="Proteomics">
        <title>N-terminome analysis of the human mitochondrial proteome.</title>
        <authorList>
            <person name="Vaca Jacome A.S."/>
            <person name="Rabilloud T."/>
            <person name="Schaeffer-Reiss C."/>
            <person name="Rompais M."/>
            <person name="Ayoub D."/>
            <person name="Lane L."/>
            <person name="Bairoch A."/>
            <person name="Van Dorsselaer A."/>
            <person name="Carapito C."/>
        </authorList>
    </citation>
    <scope>IDENTIFICATION BY MASS SPECTROMETRY [LARGE SCALE ANALYSIS]</scope>
</reference>
<reference key="20">
    <citation type="journal article" date="2017" name="Sci. Rep.">
        <title>Developmentally Regulated GTP binding protein 1 (DRG1) controls microtubule dynamics.</title>
        <authorList>
            <person name="Schellhaus A.K."/>
            <person name="Moreno-Andres D."/>
            <person name="Chugh M."/>
            <person name="Yokoyama H."/>
            <person name="Moschopoulou A."/>
            <person name="De S."/>
            <person name="Bono F."/>
            <person name="Hipp K."/>
            <person name="Schaeffer E."/>
            <person name="Antonin W."/>
        </authorList>
    </citation>
    <scope>INTERACTION WITH MICROTUBULES</scope>
</reference>
<name>ZC3HF_HUMAN</name>
<gene>
    <name type="primary">ZC3H15</name>
    <name type="synonym">DFRP1</name>
    <name type="synonym">LEREPO4</name>
    <name type="ORF">HSPC303</name>
    <name type="ORF">HT010</name>
    <name type="ORF">MSTP012</name>
    <name type="ORF">PP730</name>
</gene>
<evidence type="ECO:0000250" key="1"/>
<evidence type="ECO:0000255" key="2"/>
<evidence type="ECO:0000255" key="3">
    <source>
        <dbReference type="PROSITE-ProRule" id="PRU00723"/>
    </source>
</evidence>
<evidence type="ECO:0000256" key="4">
    <source>
        <dbReference type="SAM" id="MobiDB-lite"/>
    </source>
</evidence>
<evidence type="ECO:0000269" key="5">
    <source>
    </source>
</evidence>
<evidence type="ECO:0000269" key="6">
    <source>
    </source>
</evidence>
<evidence type="ECO:0000269" key="7">
    <source>
    </source>
</evidence>
<evidence type="ECO:0000269" key="8">
    <source>
    </source>
</evidence>
<evidence type="ECO:0000303" key="9">
    <source>
    </source>
</evidence>
<evidence type="ECO:0000305" key="10"/>
<evidence type="ECO:0007744" key="11">
    <source>
    </source>
</evidence>
<evidence type="ECO:0007744" key="12">
    <source>
    </source>
</evidence>
<evidence type="ECO:0007744" key="13">
    <source>
    </source>
</evidence>
<evidence type="ECO:0007744" key="14">
    <source>
    </source>
</evidence>
<evidence type="ECO:0007744" key="15">
    <source>
    </source>
</evidence>
<feature type="chain" id="PRO_0000324642" description="Zinc finger CCCH domain-containing protein 15">
    <location>
        <begin position="1"/>
        <end position="426"/>
    </location>
</feature>
<feature type="zinc finger region" description="C3H1-type 1" evidence="3">
    <location>
        <begin position="99"/>
        <end position="126"/>
    </location>
</feature>
<feature type="zinc finger region" description="C3H1-type 2" evidence="3">
    <location>
        <begin position="174"/>
        <end position="212"/>
    </location>
</feature>
<feature type="region of interest" description="Disordered" evidence="4">
    <location>
        <begin position="1"/>
        <end position="30"/>
    </location>
</feature>
<feature type="region of interest" description="Disordered" evidence="4">
    <location>
        <begin position="53"/>
        <end position="74"/>
    </location>
</feature>
<feature type="region of interest" description="Required for interaction with DRG1" evidence="1">
    <location>
        <begin position="236"/>
        <end position="260"/>
    </location>
</feature>
<feature type="region of interest" description="Disordered" evidence="4">
    <location>
        <begin position="299"/>
        <end position="326"/>
    </location>
</feature>
<feature type="region of interest" description="Disordered" evidence="4">
    <location>
        <begin position="358"/>
        <end position="411"/>
    </location>
</feature>
<feature type="coiled-coil region" evidence="2">
    <location>
        <begin position="61"/>
        <end position="86"/>
    </location>
</feature>
<feature type="coiled-coil region" evidence="2">
    <location>
        <begin position="218"/>
        <end position="285"/>
    </location>
</feature>
<feature type="compositionally biased region" description="Low complexity" evidence="4">
    <location>
        <begin position="1"/>
        <end position="12"/>
    </location>
</feature>
<feature type="compositionally biased region" description="Basic and acidic residues" evidence="4">
    <location>
        <begin position="13"/>
        <end position="29"/>
    </location>
</feature>
<feature type="compositionally biased region" description="Polar residues" evidence="4">
    <location>
        <begin position="53"/>
        <end position="62"/>
    </location>
</feature>
<feature type="compositionally biased region" description="Basic and acidic residues" evidence="4">
    <location>
        <begin position="64"/>
        <end position="74"/>
    </location>
</feature>
<feature type="modified residue" description="Phosphoserine" evidence="15">
    <location>
        <position position="231"/>
    </location>
</feature>
<feature type="modified residue" description="Phosphoserine" evidence="12 13 15">
    <location>
        <position position="351"/>
    </location>
</feature>
<feature type="modified residue" description="Phosphoserine" evidence="15">
    <location>
        <position position="360"/>
    </location>
</feature>
<feature type="modified residue" description="Phosphoserine" evidence="11 14 15">
    <location>
        <position position="381"/>
    </location>
</feature>
<feature type="splice variant" id="VSP_055992" description="In isoform 2." evidence="9">
    <location>
        <begin position="1"/>
        <end position="205"/>
    </location>
</feature>
<feature type="splice variant" id="VSP_055993" description="In isoform 2." evidence="9">
    <original>DDSVSVNDIDLSLYIPRDVDETGITVASLERFSTYTSDKDENKL</original>
    <variation>RGSFVPHLLMLIERNNRKYHNMVKSHQHQSHSAWVQILTPTMGN</variation>
    <location>
        <begin position="324"/>
        <end position="367"/>
    </location>
</feature>
<feature type="splice variant" id="VSP_055994" description="In isoform 2." evidence="9">
    <location>
        <begin position="368"/>
        <end position="426"/>
    </location>
</feature>
<feature type="sequence variant" id="VAR_039867" description="In dbSNP:rs11555006.">
    <original>V</original>
    <variation>E</variation>
    <location>
        <position position="342"/>
    </location>
</feature>
<feature type="sequence variant" id="VAR_052969" description="In dbSNP:rs1043497.">
    <original>T</original>
    <variation>P</variation>
    <location>
        <position position="408"/>
    </location>
</feature>
<feature type="sequence conflict" description="In Ref. 5; AAL55770." evidence="10" ref="5">
    <original>G</original>
    <variation>R</variation>
    <location>
        <position position="10"/>
    </location>
</feature>
<feature type="sequence conflict" description="In Ref. 3; AAF67649." evidence="10" ref="3">
    <original>EQ</original>
    <variation>DE</variation>
    <location>
        <begin position="16"/>
        <end position="17"/>
    </location>
</feature>
<feature type="sequence conflict" description="In Ref. 2; AAF28981." evidence="10" ref="2">
    <original>Q</original>
    <variation>T</variation>
    <location>
        <position position="17"/>
    </location>
</feature>
<feature type="sequence conflict" description="In Ref. 5; AAL55770." evidence="10" ref="5">
    <original>D</original>
    <variation>G</variation>
    <location>
        <position position="26"/>
    </location>
</feature>
<feature type="sequence conflict" description="In Ref. 5; AAL55770." evidence="10" ref="5">
    <original>A</original>
    <variation>T</variation>
    <location>
        <position position="37"/>
    </location>
</feature>
<feature type="sequence conflict" description="In Ref. 2; AAF28981 and 3; AAF67649." evidence="10" ref="2 3">
    <original>E</original>
    <variation>D</variation>
    <location>
        <position position="77"/>
    </location>
</feature>
<feature type="sequence conflict" description="In Ref. 4; BAA91968." evidence="10" ref="4">
    <original>Q</original>
    <variation>R</variation>
    <location>
        <position position="112"/>
    </location>
</feature>
<feature type="sequence conflict" description="In Ref. 2; AAF28981." evidence="10" ref="2">
    <original>V</original>
    <variation>A</variation>
    <location>
        <position position="342"/>
    </location>
</feature>
<feature type="sequence conflict" description="In Ref. 2; AAF28981." evidence="10" ref="2">
    <original>N</original>
    <variation>T</variation>
    <location>
        <position position="365"/>
    </location>
</feature>
<feature type="sequence conflict" description="In Ref. 1; AAQ13514." evidence="10" ref="1">
    <original>D</original>
    <variation>V</variation>
    <location>
        <position position="413"/>
    </location>
</feature>
<keyword id="KW-0025">Alternative splicing</keyword>
<keyword id="KW-0175">Coiled coil</keyword>
<keyword id="KW-0963">Cytoplasm</keyword>
<keyword id="KW-0479">Metal-binding</keyword>
<keyword id="KW-0539">Nucleus</keyword>
<keyword id="KW-0597">Phosphoprotein</keyword>
<keyword id="KW-1267">Proteomics identification</keyword>
<keyword id="KW-1185">Reference proteome</keyword>
<keyword id="KW-0677">Repeat</keyword>
<keyword id="KW-0862">Zinc</keyword>
<keyword id="KW-0863">Zinc-finger</keyword>
<organism>
    <name type="scientific">Homo sapiens</name>
    <name type="common">Human</name>
    <dbReference type="NCBI Taxonomy" id="9606"/>
    <lineage>
        <taxon>Eukaryota</taxon>
        <taxon>Metazoa</taxon>
        <taxon>Chordata</taxon>
        <taxon>Craniata</taxon>
        <taxon>Vertebrata</taxon>
        <taxon>Euteleostomi</taxon>
        <taxon>Mammalia</taxon>
        <taxon>Eutheria</taxon>
        <taxon>Euarchontoglires</taxon>
        <taxon>Primates</taxon>
        <taxon>Haplorrhini</taxon>
        <taxon>Catarrhini</taxon>
        <taxon>Hominidae</taxon>
        <taxon>Homo</taxon>
    </lineage>
</organism>
<comment type="function">
    <text evidence="6 7">Protects DRG1 from proteolytic degradation (PubMed:19819225). Stimulates DRG1 GTPase activity likely by increasing the affinity for the potassium ions (PubMed:23711155).</text>
</comment>
<comment type="subunit">
    <text evidence="5 6 7 8">Interacts with DRG1; this interaction prevents DRG1 poly-ubiquitination and degradation by proteasome. DRG1-ZC3H15/DFRP1 complex co-sediments with polysomes. Associates with microtubules.</text>
</comment>
<comment type="interaction">
    <interactant intactId="EBI-1042636">
        <id>Q8WU90</id>
    </interactant>
    <interactant intactId="EBI-719554">
        <id>Q9Y295</id>
        <label>DRG1</label>
    </interactant>
    <organismsDiffer>false</organismsDiffer>
    <experiments>11</experiments>
</comment>
<comment type="subcellular location">
    <subcellularLocation>
        <location evidence="5 6">Cytoplasm</location>
    </subcellularLocation>
    <subcellularLocation>
        <location evidence="1">Nucleus</location>
    </subcellularLocation>
    <text>The DRG1-DFRP2/ZC3H15 complex associates with polysomes.</text>
</comment>
<comment type="alternative products">
    <event type="alternative splicing"/>
    <isoform>
        <id>Q8WU90-1</id>
        <name>1</name>
        <sequence type="displayed"/>
    </isoform>
    <isoform>
        <id>Q8WU90-2</id>
        <name>2</name>
        <sequence type="described" ref="VSP_055992 VSP_055993 VSP_055994"/>
    </isoform>
</comment>
<comment type="similarity">
    <text evidence="10">Belongs to the ZC3H15/TMA46 family.</text>
</comment>
<comment type="sequence caution" evidence="10">
    <conflict type="frameshift">
        <sequence resource="EMBL-CDS" id="AAF28981"/>
    </conflict>
</comment>
<comment type="sequence caution" evidence="10">
    <conflict type="frameshift">
        <sequence resource="EMBL-CDS" id="AAF67649"/>
    </conflict>
</comment>
<comment type="sequence caution" evidence="10">
    <conflict type="frameshift">
        <sequence resource="EMBL-CDS" id="AAL55770"/>
    </conflict>
</comment>
<comment type="sequence caution" evidence="10">
    <conflict type="frameshift">
        <sequence resource="EMBL-CDS" id="AAQ13514"/>
    </conflict>
</comment>